<keyword id="KW-0143">Chaperone</keyword>
<keyword id="KW-0963">Cytoplasm</keyword>
<keyword id="KW-0996">Nickel insertion</keyword>
<keyword id="KW-1185">Reference proteome</keyword>
<reference key="1">
    <citation type="journal article" date="2007" name="Science">
        <title>Legumes symbioses: absence of nod genes in photosynthetic bradyrhizobia.</title>
        <authorList>
            <person name="Giraud E."/>
            <person name="Moulin L."/>
            <person name="Vallenet D."/>
            <person name="Barbe V."/>
            <person name="Cytryn E."/>
            <person name="Avarre J.-C."/>
            <person name="Jaubert M."/>
            <person name="Simon D."/>
            <person name="Cartieaux F."/>
            <person name="Prin Y."/>
            <person name="Bena G."/>
            <person name="Hannibal L."/>
            <person name="Fardoux J."/>
            <person name="Kojadinovic M."/>
            <person name="Vuillet L."/>
            <person name="Lajus A."/>
            <person name="Cruveiller S."/>
            <person name="Rouy Z."/>
            <person name="Mangenot S."/>
            <person name="Segurens B."/>
            <person name="Dossat C."/>
            <person name="Franck W.L."/>
            <person name="Chang W.-S."/>
            <person name="Saunders E."/>
            <person name="Bruce D."/>
            <person name="Richardson P."/>
            <person name="Normand P."/>
            <person name="Dreyfus B."/>
            <person name="Pignol D."/>
            <person name="Stacey G."/>
            <person name="Emerich D."/>
            <person name="Vermeglio A."/>
            <person name="Medigue C."/>
            <person name="Sadowsky M."/>
        </authorList>
    </citation>
    <scope>NUCLEOTIDE SEQUENCE [LARGE SCALE GENOMIC DNA]</scope>
    <source>
        <strain>BTAi1 / ATCC BAA-1182</strain>
    </source>
</reference>
<organism>
    <name type="scientific">Bradyrhizobium sp. (strain BTAi1 / ATCC BAA-1182)</name>
    <dbReference type="NCBI Taxonomy" id="288000"/>
    <lineage>
        <taxon>Bacteria</taxon>
        <taxon>Pseudomonadati</taxon>
        <taxon>Pseudomonadota</taxon>
        <taxon>Alphaproteobacteria</taxon>
        <taxon>Hyphomicrobiales</taxon>
        <taxon>Nitrobacteraceae</taxon>
        <taxon>Bradyrhizobium</taxon>
    </lineage>
</organism>
<dbReference type="EMBL" id="CP000494">
    <property type="protein sequence ID" value="ABQ38891.1"/>
    <property type="molecule type" value="Genomic_DNA"/>
</dbReference>
<dbReference type="RefSeq" id="WP_012046823.1">
    <property type="nucleotide sequence ID" value="NC_009485.1"/>
</dbReference>
<dbReference type="SMR" id="A5ERU7"/>
<dbReference type="STRING" id="288000.BBta_7006"/>
<dbReference type="KEGG" id="bbt:BBta_7006"/>
<dbReference type="eggNOG" id="COG0830">
    <property type="taxonomic scope" value="Bacteria"/>
</dbReference>
<dbReference type="HOGENOM" id="CLU_049215_2_0_5"/>
<dbReference type="OrthoDB" id="9798772at2"/>
<dbReference type="Proteomes" id="UP000000246">
    <property type="component" value="Chromosome"/>
</dbReference>
<dbReference type="GO" id="GO:0005737">
    <property type="term" value="C:cytoplasm"/>
    <property type="evidence" value="ECO:0007669"/>
    <property type="project" value="UniProtKB-SubCell"/>
</dbReference>
<dbReference type="GO" id="GO:0016151">
    <property type="term" value="F:nickel cation binding"/>
    <property type="evidence" value="ECO:0007669"/>
    <property type="project" value="UniProtKB-UniRule"/>
</dbReference>
<dbReference type="Gene3D" id="1.10.4190.10">
    <property type="entry name" value="Urease accessory protein UreF"/>
    <property type="match status" value="1"/>
</dbReference>
<dbReference type="HAMAP" id="MF_01385">
    <property type="entry name" value="UreF"/>
    <property type="match status" value="1"/>
</dbReference>
<dbReference type="InterPro" id="IPR002639">
    <property type="entry name" value="UreF"/>
</dbReference>
<dbReference type="InterPro" id="IPR038277">
    <property type="entry name" value="UreF_sf"/>
</dbReference>
<dbReference type="PANTHER" id="PTHR33620">
    <property type="entry name" value="UREASE ACCESSORY PROTEIN F"/>
    <property type="match status" value="1"/>
</dbReference>
<dbReference type="PANTHER" id="PTHR33620:SF1">
    <property type="entry name" value="UREASE ACCESSORY PROTEIN F"/>
    <property type="match status" value="1"/>
</dbReference>
<dbReference type="Pfam" id="PF01730">
    <property type="entry name" value="UreF"/>
    <property type="match status" value="1"/>
</dbReference>
<dbReference type="PIRSF" id="PIRSF009467">
    <property type="entry name" value="Ureas_acces_UreF"/>
    <property type="match status" value="1"/>
</dbReference>
<protein>
    <recommendedName>
        <fullName evidence="1">Urease accessory protein UreF</fullName>
    </recommendedName>
</protein>
<proteinExistence type="inferred from homology"/>
<comment type="function">
    <text evidence="1">Required for maturation of urease via the functional incorporation of the urease nickel metallocenter.</text>
</comment>
<comment type="subunit">
    <text evidence="1">UreD, UreF and UreG form a complex that acts as a GTP-hydrolysis-dependent molecular chaperone, activating the urease apoprotein by helping to assemble the nickel containing metallocenter of UreC. The UreE protein probably delivers the nickel.</text>
</comment>
<comment type="subcellular location">
    <subcellularLocation>
        <location evidence="1">Cytoplasm</location>
    </subcellularLocation>
</comment>
<comment type="similarity">
    <text evidence="1">Belongs to the UreF family.</text>
</comment>
<accession>A5ERU7</accession>
<feature type="chain" id="PRO_0000344081" description="Urease accessory protein UreF">
    <location>
        <begin position="1"/>
        <end position="240"/>
    </location>
</feature>
<sequence length="240" mass="25740">MTASERPHVSAAMTELDHPALYRLMTWLSPAFPVGGFAYSSGIEWAVEAGDVDDAASLRGWLSTMLTDGSGFCDAVFLVHAHRAMELGDIDRLREVAELAAAFVPSRERQLETTAQGRAFIEIARSAWNSPGLDDAVSQCEAMVYPVAVGVVGAAHGIQSSLLLHAYLHAVTSNWISAGSRLIPLGQTDSQRVLAALEPVVTATAVRAISASLDDIGSATFRADLASLRHETQYTRLFRS</sequence>
<evidence type="ECO:0000255" key="1">
    <source>
        <dbReference type="HAMAP-Rule" id="MF_01385"/>
    </source>
</evidence>
<name>UREF_BRASB</name>
<gene>
    <name evidence="1" type="primary">ureF</name>
    <name type="ordered locus">BBta_7006</name>
</gene>